<comment type="function">
    <text evidence="1">This protein is one of the early assembly proteins of the 50S ribosomal subunit, although it is not seen to bind rRNA by itself. It is important during the early stages of 50S assembly.</text>
</comment>
<comment type="subunit">
    <text evidence="1">Part of the 50S ribosomal subunit.</text>
</comment>
<comment type="similarity">
    <text evidence="1">Belongs to the universal ribosomal protein uL13 family.</text>
</comment>
<feature type="chain" id="PRO_1000214944" description="Large ribosomal subunit protein uL13">
    <location>
        <begin position="1"/>
        <end position="143"/>
    </location>
</feature>
<protein>
    <recommendedName>
        <fullName evidence="1">Large ribosomal subunit protein uL13</fullName>
    </recommendedName>
    <alternativeName>
        <fullName evidence="2">50S ribosomal protein L13</fullName>
    </alternativeName>
</protein>
<gene>
    <name evidence="1" type="primary">rplM</name>
    <name type="ordered locus">COPRO5265_0445</name>
</gene>
<reference key="1">
    <citation type="submission" date="2008-08" db="EMBL/GenBank/DDBJ databases">
        <title>The complete genome sequence of Coprothermobacter proteolyticus strain ATCC 5245 / DSM 5265 / BT.</title>
        <authorList>
            <person name="Dodson R.J."/>
            <person name="Durkin A.S."/>
            <person name="Wu M."/>
            <person name="Eisen J."/>
            <person name="Sutton G."/>
        </authorList>
    </citation>
    <scope>NUCLEOTIDE SEQUENCE [LARGE SCALE GENOMIC DNA]</scope>
    <source>
        <strain>ATCC 35245 / DSM 5265 / OCM 4 / BT</strain>
    </source>
</reference>
<evidence type="ECO:0000255" key="1">
    <source>
        <dbReference type="HAMAP-Rule" id="MF_01366"/>
    </source>
</evidence>
<evidence type="ECO:0000305" key="2"/>
<sequence>MKTIMAKPGQVERKWYVVDAAGKPLGRLSAGIARILMGKHKPIWTPGVDCGDFVIVINAEKVALSGSKELKKVYYDHSGYLGGQRVTPAWQLRQKKPEQLIYRSVKGMLPKNSLGRRQITHLKVYAGPEHPHQAQQPEKIELP</sequence>
<proteinExistence type="inferred from homology"/>
<dbReference type="EMBL" id="CP001145">
    <property type="protein sequence ID" value="ACI17236.1"/>
    <property type="molecule type" value="Genomic_DNA"/>
</dbReference>
<dbReference type="SMR" id="B5Y7R3"/>
<dbReference type="STRING" id="309798.COPRO5265_0445"/>
<dbReference type="KEGG" id="cpo:COPRO5265_0445"/>
<dbReference type="eggNOG" id="COG0102">
    <property type="taxonomic scope" value="Bacteria"/>
</dbReference>
<dbReference type="HOGENOM" id="CLU_082184_2_2_9"/>
<dbReference type="OrthoDB" id="9801330at2"/>
<dbReference type="Proteomes" id="UP000001732">
    <property type="component" value="Chromosome"/>
</dbReference>
<dbReference type="GO" id="GO:0022625">
    <property type="term" value="C:cytosolic large ribosomal subunit"/>
    <property type="evidence" value="ECO:0007669"/>
    <property type="project" value="TreeGrafter"/>
</dbReference>
<dbReference type="GO" id="GO:0003729">
    <property type="term" value="F:mRNA binding"/>
    <property type="evidence" value="ECO:0007669"/>
    <property type="project" value="TreeGrafter"/>
</dbReference>
<dbReference type="GO" id="GO:0003735">
    <property type="term" value="F:structural constituent of ribosome"/>
    <property type="evidence" value="ECO:0007669"/>
    <property type="project" value="InterPro"/>
</dbReference>
<dbReference type="GO" id="GO:0017148">
    <property type="term" value="P:negative regulation of translation"/>
    <property type="evidence" value="ECO:0007669"/>
    <property type="project" value="TreeGrafter"/>
</dbReference>
<dbReference type="GO" id="GO:0006412">
    <property type="term" value="P:translation"/>
    <property type="evidence" value="ECO:0007669"/>
    <property type="project" value="UniProtKB-UniRule"/>
</dbReference>
<dbReference type="CDD" id="cd00392">
    <property type="entry name" value="Ribosomal_L13"/>
    <property type="match status" value="1"/>
</dbReference>
<dbReference type="FunFam" id="3.90.1180.10:FF:000001">
    <property type="entry name" value="50S ribosomal protein L13"/>
    <property type="match status" value="1"/>
</dbReference>
<dbReference type="Gene3D" id="3.90.1180.10">
    <property type="entry name" value="Ribosomal protein L13"/>
    <property type="match status" value="1"/>
</dbReference>
<dbReference type="HAMAP" id="MF_01366">
    <property type="entry name" value="Ribosomal_uL13"/>
    <property type="match status" value="1"/>
</dbReference>
<dbReference type="InterPro" id="IPR005822">
    <property type="entry name" value="Ribosomal_uL13"/>
</dbReference>
<dbReference type="InterPro" id="IPR005823">
    <property type="entry name" value="Ribosomal_uL13_bac-type"/>
</dbReference>
<dbReference type="InterPro" id="IPR023563">
    <property type="entry name" value="Ribosomal_uL13_CS"/>
</dbReference>
<dbReference type="InterPro" id="IPR036899">
    <property type="entry name" value="Ribosomal_uL13_sf"/>
</dbReference>
<dbReference type="NCBIfam" id="TIGR01066">
    <property type="entry name" value="rplM_bact"/>
    <property type="match status" value="1"/>
</dbReference>
<dbReference type="PANTHER" id="PTHR11545:SF2">
    <property type="entry name" value="LARGE RIBOSOMAL SUBUNIT PROTEIN UL13M"/>
    <property type="match status" value="1"/>
</dbReference>
<dbReference type="PANTHER" id="PTHR11545">
    <property type="entry name" value="RIBOSOMAL PROTEIN L13"/>
    <property type="match status" value="1"/>
</dbReference>
<dbReference type="Pfam" id="PF00572">
    <property type="entry name" value="Ribosomal_L13"/>
    <property type="match status" value="1"/>
</dbReference>
<dbReference type="PIRSF" id="PIRSF002181">
    <property type="entry name" value="Ribosomal_L13"/>
    <property type="match status" value="1"/>
</dbReference>
<dbReference type="SUPFAM" id="SSF52161">
    <property type="entry name" value="Ribosomal protein L13"/>
    <property type="match status" value="1"/>
</dbReference>
<dbReference type="PROSITE" id="PS00783">
    <property type="entry name" value="RIBOSOMAL_L13"/>
    <property type="match status" value="1"/>
</dbReference>
<accession>B5Y7R3</accession>
<name>RL13_COPPD</name>
<keyword id="KW-1185">Reference proteome</keyword>
<keyword id="KW-0687">Ribonucleoprotein</keyword>
<keyword id="KW-0689">Ribosomal protein</keyword>
<organism>
    <name type="scientific">Coprothermobacter proteolyticus (strain ATCC 35245 / DSM 5265 / OCM 4 / BT)</name>
    <dbReference type="NCBI Taxonomy" id="309798"/>
    <lineage>
        <taxon>Bacteria</taxon>
        <taxon>Pseudomonadati</taxon>
        <taxon>Coprothermobacterota</taxon>
        <taxon>Coprothermobacteria</taxon>
        <taxon>Coprothermobacterales</taxon>
        <taxon>Coprothermobacteraceae</taxon>
        <taxon>Coprothermobacter</taxon>
    </lineage>
</organism>